<gene>
    <name type="primary">TEL1</name>
    <name type="ordered locus">YBL088C</name>
    <name type="ORF">YBL0706</name>
</gene>
<accession>P38110</accession>
<accession>D6VPR6</accession>
<dbReference type="EC" id="2.7.11.1"/>
<dbReference type="EMBL" id="X79489">
    <property type="protein sequence ID" value="CAA56016.1"/>
    <property type="molecule type" value="Genomic_DNA"/>
</dbReference>
<dbReference type="EMBL" id="Z35849">
    <property type="protein sequence ID" value="CAA84909.1"/>
    <property type="molecule type" value="Genomic_DNA"/>
</dbReference>
<dbReference type="EMBL" id="U31331">
    <property type="protein sequence ID" value="AAA69802.1"/>
    <property type="molecule type" value="Genomic_DNA"/>
</dbReference>
<dbReference type="EMBL" id="BK006936">
    <property type="protein sequence ID" value="DAA07036.2"/>
    <property type="molecule type" value="Genomic_DNA"/>
</dbReference>
<dbReference type="PIR" id="S45416">
    <property type="entry name" value="S45416"/>
</dbReference>
<dbReference type="RefSeq" id="NP_009465.2">
    <property type="nucleotide sequence ID" value="NM_001178328.2"/>
</dbReference>
<dbReference type="PDB" id="3H7B">
    <property type="method" value="X-ray"/>
    <property type="resolution" value="1.88 A"/>
    <property type="chains" value="C/F=549-557"/>
</dbReference>
<dbReference type="PDB" id="3H9H">
    <property type="method" value="X-ray"/>
    <property type="resolution" value="2.00 A"/>
    <property type="chains" value="C/F=549-557"/>
</dbReference>
<dbReference type="PDB" id="3H9S">
    <property type="method" value="X-ray"/>
    <property type="resolution" value="2.70 A"/>
    <property type="chains" value="C=549-557"/>
</dbReference>
<dbReference type="PDB" id="6JXA">
    <property type="method" value="EM"/>
    <property type="resolution" value="4.30 A"/>
    <property type="chains" value="A=1-2787"/>
</dbReference>
<dbReference type="PDB" id="6JXC">
    <property type="method" value="EM"/>
    <property type="resolution" value="4.10 A"/>
    <property type="chains" value="A=1-2787"/>
</dbReference>
<dbReference type="PDB" id="6S8F">
    <property type="method" value="EM"/>
    <property type="resolution" value="4.00 A"/>
    <property type="chains" value="F/H=968-2787"/>
</dbReference>
<dbReference type="PDBsum" id="3H7B"/>
<dbReference type="PDBsum" id="3H9H"/>
<dbReference type="PDBsum" id="3H9S"/>
<dbReference type="PDBsum" id="6JXA"/>
<dbReference type="PDBsum" id="6JXC"/>
<dbReference type="PDBsum" id="6S8F"/>
<dbReference type="EMDB" id="EMD-10120"/>
<dbReference type="EMDB" id="EMD-9892"/>
<dbReference type="EMDB" id="EMD-9893"/>
<dbReference type="SMR" id="P38110"/>
<dbReference type="BioGRID" id="32616">
    <property type="interactions" value="196"/>
</dbReference>
<dbReference type="DIP" id="DIP-6524N"/>
<dbReference type="FunCoup" id="P38110">
    <property type="interactions" value="130"/>
</dbReference>
<dbReference type="IntAct" id="P38110">
    <property type="interactions" value="6"/>
</dbReference>
<dbReference type="MINT" id="P38110"/>
<dbReference type="STRING" id="4932.YBL088C"/>
<dbReference type="iPTMnet" id="P38110"/>
<dbReference type="PaxDb" id="4932-YBL088C"/>
<dbReference type="PeptideAtlas" id="P38110"/>
<dbReference type="EnsemblFungi" id="YBL088C_mRNA">
    <property type="protein sequence ID" value="YBL088C"/>
    <property type="gene ID" value="YBL088C"/>
</dbReference>
<dbReference type="GeneID" id="852190"/>
<dbReference type="KEGG" id="sce:YBL088C"/>
<dbReference type="AGR" id="SGD:S000000184"/>
<dbReference type="SGD" id="S000000184">
    <property type="gene designation" value="TEL1"/>
</dbReference>
<dbReference type="VEuPathDB" id="FungiDB:YBL088C"/>
<dbReference type="eggNOG" id="KOG0892">
    <property type="taxonomic scope" value="Eukaryota"/>
</dbReference>
<dbReference type="GeneTree" id="ENSGT00940000174195"/>
<dbReference type="HOGENOM" id="CLU_000178_8_1_1"/>
<dbReference type="InParanoid" id="P38110"/>
<dbReference type="OMA" id="IYMGWSP"/>
<dbReference type="OrthoDB" id="381190at2759"/>
<dbReference type="BioCyc" id="YEAST:G3O-28977-MONOMER"/>
<dbReference type="Reactome" id="R-SCE-2559586">
    <property type="pathway name" value="DNA Damage/Telomere Stress Induced Senescence"/>
</dbReference>
<dbReference type="Reactome" id="R-SCE-5693548">
    <property type="pathway name" value="Sensing of DNA Double Strand Breaks"/>
</dbReference>
<dbReference type="Reactome" id="R-SCE-5693565">
    <property type="pathway name" value="Recruitment and ATM-mediated phosphorylation of repair and signaling proteins at DNA double strand breaks"/>
</dbReference>
<dbReference type="Reactome" id="R-SCE-9664873">
    <property type="pathway name" value="Pexophagy"/>
</dbReference>
<dbReference type="BioGRID-ORCS" id="852190">
    <property type="hits" value="0 hits in 13 CRISPR screens"/>
</dbReference>
<dbReference type="EvolutionaryTrace" id="P38110"/>
<dbReference type="PRO" id="PR:P38110"/>
<dbReference type="Proteomes" id="UP000002311">
    <property type="component" value="Chromosome II"/>
</dbReference>
<dbReference type="RNAct" id="P38110">
    <property type="molecule type" value="protein"/>
</dbReference>
<dbReference type="GO" id="GO:0005694">
    <property type="term" value="C:chromosome"/>
    <property type="evidence" value="ECO:0000318"/>
    <property type="project" value="GO_Central"/>
</dbReference>
<dbReference type="GO" id="GO:0000781">
    <property type="term" value="C:chromosome, telomeric region"/>
    <property type="evidence" value="ECO:0007669"/>
    <property type="project" value="UniProtKB-SubCell"/>
</dbReference>
<dbReference type="GO" id="GO:0005739">
    <property type="term" value="C:mitochondrion"/>
    <property type="evidence" value="ECO:0007005"/>
    <property type="project" value="SGD"/>
</dbReference>
<dbReference type="GO" id="GO:0005634">
    <property type="term" value="C:nucleus"/>
    <property type="evidence" value="ECO:0000314"/>
    <property type="project" value="SGD"/>
</dbReference>
<dbReference type="GO" id="GO:0005524">
    <property type="term" value="F:ATP binding"/>
    <property type="evidence" value="ECO:0007669"/>
    <property type="project" value="UniProtKB-KW"/>
</dbReference>
<dbReference type="GO" id="GO:0070273">
    <property type="term" value="F:phosphatidylinositol-4-phosphate binding"/>
    <property type="evidence" value="ECO:0000314"/>
    <property type="project" value="SGD"/>
</dbReference>
<dbReference type="GO" id="GO:0004672">
    <property type="term" value="F:protein kinase activity"/>
    <property type="evidence" value="ECO:0000314"/>
    <property type="project" value="SGD"/>
</dbReference>
<dbReference type="GO" id="GO:0106310">
    <property type="term" value="F:protein serine kinase activity"/>
    <property type="evidence" value="ECO:0007669"/>
    <property type="project" value="RHEA"/>
</dbReference>
<dbReference type="GO" id="GO:0004674">
    <property type="term" value="F:protein serine/threonine kinase activity"/>
    <property type="evidence" value="ECO:0000315"/>
    <property type="project" value="SGD"/>
</dbReference>
<dbReference type="GO" id="GO:0042162">
    <property type="term" value="F:telomeric DNA binding"/>
    <property type="evidence" value="ECO:0000314"/>
    <property type="project" value="SGD"/>
</dbReference>
<dbReference type="GO" id="GO:0006325">
    <property type="term" value="P:chromatin organization"/>
    <property type="evidence" value="ECO:0007669"/>
    <property type="project" value="UniProtKB-KW"/>
</dbReference>
<dbReference type="GO" id="GO:0000077">
    <property type="term" value="P:DNA damage checkpoint signaling"/>
    <property type="evidence" value="ECO:0000318"/>
    <property type="project" value="GO_Central"/>
</dbReference>
<dbReference type="GO" id="GO:0006974">
    <property type="term" value="P:DNA damage response"/>
    <property type="evidence" value="ECO:0000315"/>
    <property type="project" value="SGD"/>
</dbReference>
<dbReference type="GO" id="GO:0006281">
    <property type="term" value="P:DNA repair"/>
    <property type="evidence" value="ECO:0000316"/>
    <property type="project" value="SGD"/>
</dbReference>
<dbReference type="GO" id="GO:0006302">
    <property type="term" value="P:double-strand break repair"/>
    <property type="evidence" value="ECO:0000315"/>
    <property type="project" value="SGD"/>
</dbReference>
<dbReference type="GO" id="GO:0042770">
    <property type="term" value="P:signal transduction in response to DNA damage"/>
    <property type="evidence" value="ECO:0000315"/>
    <property type="project" value="SGD"/>
</dbReference>
<dbReference type="GO" id="GO:0000723">
    <property type="term" value="P:telomere maintenance"/>
    <property type="evidence" value="ECO:0000315"/>
    <property type="project" value="SGD"/>
</dbReference>
<dbReference type="CDD" id="cd05171">
    <property type="entry name" value="PIKKc_ATM"/>
    <property type="match status" value="1"/>
</dbReference>
<dbReference type="FunFam" id="3.30.1010.10:FF:000032">
    <property type="entry name" value="Serine/threonine-protein kinase TEL1"/>
    <property type="match status" value="1"/>
</dbReference>
<dbReference type="FunFam" id="1.10.1070.11:FF:000038">
    <property type="entry name" value="Serine/threonine-protein kinase Tel1"/>
    <property type="match status" value="1"/>
</dbReference>
<dbReference type="Gene3D" id="1.10.1070.11">
    <property type="entry name" value="Phosphatidylinositol 3-/4-kinase, catalytic domain"/>
    <property type="match status" value="1"/>
</dbReference>
<dbReference type="Gene3D" id="3.30.1010.10">
    <property type="entry name" value="Phosphatidylinositol 3-kinase Catalytic Subunit, Chain A, domain 4"/>
    <property type="match status" value="1"/>
</dbReference>
<dbReference type="InterPro" id="IPR038980">
    <property type="entry name" value="ATM_plant"/>
</dbReference>
<dbReference type="InterPro" id="IPR003152">
    <property type="entry name" value="FATC_dom"/>
</dbReference>
<dbReference type="InterPro" id="IPR011009">
    <property type="entry name" value="Kinase-like_dom_sf"/>
</dbReference>
<dbReference type="InterPro" id="IPR000403">
    <property type="entry name" value="PI3/4_kinase_cat_dom"/>
</dbReference>
<dbReference type="InterPro" id="IPR036940">
    <property type="entry name" value="PI3/4_kinase_cat_sf"/>
</dbReference>
<dbReference type="InterPro" id="IPR018936">
    <property type="entry name" value="PI3/4_kinase_CS"/>
</dbReference>
<dbReference type="InterPro" id="IPR014009">
    <property type="entry name" value="PIK_FAT"/>
</dbReference>
<dbReference type="InterPro" id="IPR044107">
    <property type="entry name" value="PIKKc_ATM"/>
</dbReference>
<dbReference type="InterPro" id="IPR021668">
    <property type="entry name" value="TAN"/>
</dbReference>
<dbReference type="PANTHER" id="PTHR37079">
    <property type="entry name" value="SERINE/THREONINE-PROTEIN KINASE ATM"/>
    <property type="match status" value="1"/>
</dbReference>
<dbReference type="PANTHER" id="PTHR37079:SF4">
    <property type="entry name" value="SERINE_THREONINE-PROTEIN KINASE ATM"/>
    <property type="match status" value="1"/>
</dbReference>
<dbReference type="Pfam" id="PF02260">
    <property type="entry name" value="FATC"/>
    <property type="match status" value="1"/>
</dbReference>
<dbReference type="Pfam" id="PF00454">
    <property type="entry name" value="PI3_PI4_kinase"/>
    <property type="match status" value="1"/>
</dbReference>
<dbReference type="Pfam" id="PF11640">
    <property type="entry name" value="TAN"/>
    <property type="match status" value="1"/>
</dbReference>
<dbReference type="SMART" id="SM01343">
    <property type="entry name" value="FATC"/>
    <property type="match status" value="1"/>
</dbReference>
<dbReference type="SMART" id="SM00146">
    <property type="entry name" value="PI3Kc"/>
    <property type="match status" value="1"/>
</dbReference>
<dbReference type="SMART" id="SM01342">
    <property type="entry name" value="TAN"/>
    <property type="match status" value="1"/>
</dbReference>
<dbReference type="SUPFAM" id="SSF56112">
    <property type="entry name" value="Protein kinase-like (PK-like)"/>
    <property type="match status" value="1"/>
</dbReference>
<dbReference type="PROSITE" id="PS51189">
    <property type="entry name" value="FAT"/>
    <property type="match status" value="1"/>
</dbReference>
<dbReference type="PROSITE" id="PS51190">
    <property type="entry name" value="FATC"/>
    <property type="match status" value="1"/>
</dbReference>
<dbReference type="PROSITE" id="PS00915">
    <property type="entry name" value="PI3_4_KINASE_1"/>
    <property type="match status" value="1"/>
</dbReference>
<dbReference type="PROSITE" id="PS00916">
    <property type="entry name" value="PI3_4_KINASE_2"/>
    <property type="match status" value="1"/>
</dbReference>
<dbReference type="PROSITE" id="PS50290">
    <property type="entry name" value="PI3_4_KINASE_3"/>
    <property type="match status" value="1"/>
</dbReference>
<feature type="chain" id="PRO_0000088839" description="Serine/threonine-protein kinase TEL1">
    <location>
        <begin position="1"/>
        <end position="2787"/>
    </location>
</feature>
<feature type="domain" description="FAT" evidence="2">
    <location>
        <begin position="1734"/>
        <end position="2326"/>
    </location>
</feature>
<feature type="domain" description="PI3K/PI4K catalytic" evidence="1">
    <location>
        <begin position="2434"/>
        <end position="2746"/>
    </location>
</feature>
<feature type="domain" description="FATC" evidence="2 3">
    <location>
        <begin position="2755"/>
        <end position="2787"/>
    </location>
</feature>
<feature type="region of interest" description="G-loop" evidence="1">
    <location>
        <begin position="2440"/>
        <end position="2446"/>
    </location>
</feature>
<feature type="region of interest" description="Catalytic loop" evidence="1">
    <location>
        <begin position="2609"/>
        <end position="2617"/>
    </location>
</feature>
<feature type="region of interest" description="Activation loop" evidence="1">
    <location>
        <begin position="2629"/>
        <end position="2653"/>
    </location>
</feature>
<feature type="mutagenesis site" description="In TEL1-11; short telomere phenotype and impairs DNA-damage checkpoint function at 37 degrees Celsius." evidence="14">
    <original>E</original>
    <variation>K</variation>
    <location>
        <position position="1319"/>
    </location>
</feature>
<feature type="mutagenesis site" description="Short telomere phenotype in vivo and impairs kinase activity in vitro; when associated with K-2616 and E-2631." evidence="4 15">
    <original>GD</original>
    <variation>DA</variation>
    <location>
        <begin position="2611"/>
        <end position="2612"/>
    </location>
</feature>
<feature type="mutagenesis site" description="Short telomere phenotype in vivo and impairs kinase activity in vitro; when associated with D-2611-2612-A and E-2631." evidence="4 15">
    <original>N</original>
    <variation>K</variation>
    <location>
        <position position="2616"/>
    </location>
</feature>
<feature type="mutagenesis site" description="Short telomere phenotype in vivo and impairs kinase activity in vitro; when associated with D-2611-2612-A and K-2616." evidence="4 15">
    <original>D</original>
    <variation>E</variation>
    <location>
        <position position="2631"/>
    </location>
</feature>
<feature type="sequence conflict" description="In Ref. 4; AAA69802." evidence="17" ref="4">
    <original>D</original>
    <variation>E</variation>
    <location>
        <position position="64"/>
    </location>
</feature>
<feature type="sequence conflict" description="In Ref. 1; CAA56016." evidence="17" ref="1">
    <original>C</original>
    <variation>W</variation>
    <location>
        <position position="164"/>
    </location>
</feature>
<feature type="sequence conflict" description="In Ref. 1; CAA56016." evidence="17" ref="1">
    <original>F</original>
    <variation>Y</variation>
    <location>
        <position position="1190"/>
    </location>
</feature>
<feature type="sequence conflict" description="In Ref. 1; CAA56016 and 2; CAA84909." evidence="17" ref="1 2">
    <original>C</original>
    <variation>F</variation>
    <location>
        <position position="1412"/>
    </location>
</feature>
<sequence length="2787" mass="321524">MEDHGIVETLNFLSSTKIKERNNALDELTTILKEDPERIPTKALSTTAEALVELLASEHTKYCDLLRNLTVSTTNKLSLSENRLSTISYVLRLFVEKSCERFKVKTLKLLLAVVPELMVKDGSKSLLDAVSVHLSFALDALIKSDPFKLKFMIHQWISLVDKICEYFQSQMKLSMVDKTLTNFISILLNLLALDTVGIFQVTRTITWTVIDFLRLSKKENGNTRLIMSLINQLILKCHCFSVIDTLMLIKEAWSYNLTIGCTSNELVQDQLSLFDVMSSELMNHKLPYMIGQENYVEELRSESLVSLYREYILLRLSNYKPQLFTVNHVEFSYIRGSRDKNSWFALPDFRLRDRGGRSVWLKILGITKSLLTYFALNRKNENYSLLFKRRKCDSDIPSILRISDDMDTFLIHLLEENSSHEFEVLGLQLCSFYGTLQDFTKSFAEQLKELLFSKFEKIQCFNWVCFSFIPLLSQKECELSNGDMARLFKVCLPLVKSNESCQLSCLLLANSIKFSKQLLSDEKTINQIYDLYELSDILGPILVTNESFMLWGYLQYVGKDFQSMNGISSADRIFEWLKSKWNQLRGTDAKQDQFCNFISWLGNKYDPENPFNDKKGEGANPVSLCWDESHKIWQHFQEQREFLLGVKPEEKSECFNTPFFNLPKVSLDLTRYNEILYRLLENIESDAFSSPLQKFTWVAKLIQIVDNLCGDSTFSEFIAAYKRTTLITIPQLSFDSQNSYQSFFEEVLSIRTINVDHLVLDKINMKEIVNDFIRMQKNKSQTGTSAINYFEASSEDTTQNNSPYTIGGRFQKPLHSTIDKAVRAYLWSSRNKSISERLVAILEFSDCVSTDVFISYLGTVCQWLKQAIGEKSSYNKILEEFTEVLGEKLLCNHYSSSNQAMLLLTSYIEAIRPQWLSYPEQPLNSDCNDILDWIISRFEDNSFTGVAPTVNLSMLLLSLLQNHDLSHGSIRGGKQRVFATFIKCLQKLDSSNIINIMNSISSYMAQVSYKNQSIIFYEIKSLFGPPQQSIEKSAFYSLAMSMLSLVSYPSLVFSLEDMMTYSGFNHTRAFIQQALNKITVAFRYQNLTELFEYCKFDLIMYWFNRTKVPTSKLEKEWDISLFGFADIHEFLGRYFVEISAIYFSQGFNQKWILDMLHAITGNGDAYLVDNSYYLCIPLAFISGGVNELIFDILPQISGKTTVKYHKKYRLLMLKWIIRFTDLGSLTELRSTVEKLFPTSYLSPYLFENSSVSMRYQYPLHIPLALGATLVQTQFAHEKNNTHEFKLLFLSVITDLEKTSTYIGKLRCARELKYLFVLYENVLVKSSTLNFIIIRLSKFLIDTQIHDEVITIFSSLLNLADKNTFEIEPSLPNLFCKIFIYLRENKQLSPSFQQAIKLLEHRDLIKIKTWKYCLDAIFGNIVQDDIYENTELLDASDCGVDDVVLVSLLFSYARRPVASKIGCSLSKAAAINILKHHVPKEYLSKNFKLWFAALSRRILQQEVQRERSTNFNNEVHLKNFEMVFRHPEQPHMIYQRISTFNKEAELYDSTEVFFISECILTYLVGYSIGNSESEFCFRDNIMNENKDKVAPLDKDVLNAIYPLANNFGMESFICDTYLSVNEPYNCWLSKFARSLIHQISFNIPPIVCLYPLCKGSTAFCELVLTDLFFLSTTYDPKSCLNWSNRIFTQIAMLLHVKDSEIKLKMLFNVIKMIRMGSRCKERNCLRIYSSLDLQEICQISLKIKEFKFGYLLFEEMNMPNIREMNINTLQKIYECINDGDFLAGLPVPHSIEGVLNSINRIDSDTWKRFLFNNADFDANYTTSLEEEKESLIKATEDSGFYGLTSLLESRLSGSSDVYKWNLELGDWKLLTPKVVDSKAKGLYYAIKNLPQDVGFAEKSLEKSLLTIFDSRQHFISQTEWMDTLNAIIEFIKIAAIPQDVTSFPQTLMSIMKADKERLNTIDFYDHKTTLKSRHTLMNVLSRNSLDENVKCSKYLRLGSIIQLANYVQLAIANGAPQDALRNATLMSKTVKNIAKLYDDPSVVSQIEKLASFTSANALWESREYKAPVMIMRDLLAQNEKNISESILYDDFKLLINVPMDQIKARLVKWSSESRLEPAAAIYEKIIVNWDINVEDHESCSDVFYTLGSFLDEQAQKLRSNGEIEDREHRSYTGKSTLKALELIYKNTKLPENERKDAKRHYNRVLLQYNRDSEVLKALLLQKEKFLWHALHFYLNTLVFSNRYDNDIIDKFCGLWFENDDNSKINQLLYKEIGTIPSWKFLPWVNQIASKISMEENEFQKPLQLTMKRLLYKLPYDSLYSVMSILLYEKQSNKDTNISQKIQAVKKILLELQGYDRGAFAKKYLLPVQEFCEMSVELANLKFVQNTKTLRLANLKIGQYWLKQLNMEKLPLPTSNFTVKSSADGRKARPYIVSVNETVGITTTGLSLPKIVTFNISDGTTQKALMKGSNDDLRQDAIMEQVFQQVNKVLQNDKVLRNLDLGIRTYKVVPLGPKAGIIEFVANSTSLHQILSKLHTNDKITFDQARKGMKAVQTKSNEERLKAYLKITNEIKPQLRNFFFDSFPDPLDWFEAKKTYTKGVAASSIVGYILGLGDRHLNNILLDCSTGEPIHIDLGIAFDQGKLLPIPELVPFRLTRDIVDGFGVTGVDGLFRRSCERVYAVLRKDYVKVMCVLNILKWDPLYSWVMSPVKKYEHLFEEEHEITNFDNVSKFISNNDRNENQESYRALKGVEEKLMGNGLSVESSVQDLIQQATDPSNLSVIYMGWSPFY</sequence>
<organism>
    <name type="scientific">Saccharomyces cerevisiae (strain ATCC 204508 / S288c)</name>
    <name type="common">Baker's yeast</name>
    <dbReference type="NCBI Taxonomy" id="559292"/>
    <lineage>
        <taxon>Eukaryota</taxon>
        <taxon>Fungi</taxon>
        <taxon>Dikarya</taxon>
        <taxon>Ascomycota</taxon>
        <taxon>Saccharomycotina</taxon>
        <taxon>Saccharomycetes</taxon>
        <taxon>Saccharomycetales</taxon>
        <taxon>Saccharomycetaceae</taxon>
        <taxon>Saccharomyces</taxon>
    </lineage>
</organism>
<comment type="function">
    <text evidence="4 5 6 7 8 9 10 11 12 13 14 15 16">Serine/threonine protein kinase which activates checkpoint signaling upon genotoxic stresses such as ionizing radiation (IR), ultraviolet light (UV), or DNA replication stalling, thereby acting as a DNA damage sensor. Recognizes the substrate consensus sequence [ST]-Q. Recruited by the MRX-complex to sites of DNA lesions immediately after damage to initiate non-homologous end-joining (NHEJ). Subsequently displaced by the RPA complex in a reaction probably involving the SAE2 protein. Phosphorylates MRE11 and XRS2, 2 subunits of the MRX-complex. The phosphorylation of MRE11 is a feedback response from the checkpoint signaling pathway. Phosphorylates RAD9, CHK1 and RAD53, leading to the activation of the CHK1 and RAD23 kinases involved in the DNA damage response cascade. Phosphorylates histone H2A to form H2AS128ph (gamma-H2A) at sites of DNA damage, also involved in the regulation of DNA damage response mechanism. Also phosphorylates SLX4 and RTT107 which are involved in genome stability. Required for the control of telomere length and genome stability.</text>
</comment>
<comment type="catalytic activity">
    <reaction>
        <text>L-seryl-[protein] + ATP = O-phospho-L-seryl-[protein] + ADP + H(+)</text>
        <dbReference type="Rhea" id="RHEA:17989"/>
        <dbReference type="Rhea" id="RHEA-COMP:9863"/>
        <dbReference type="Rhea" id="RHEA-COMP:11604"/>
        <dbReference type="ChEBI" id="CHEBI:15378"/>
        <dbReference type="ChEBI" id="CHEBI:29999"/>
        <dbReference type="ChEBI" id="CHEBI:30616"/>
        <dbReference type="ChEBI" id="CHEBI:83421"/>
        <dbReference type="ChEBI" id="CHEBI:456216"/>
        <dbReference type="EC" id="2.7.11.1"/>
    </reaction>
</comment>
<comment type="catalytic activity">
    <reaction>
        <text>L-threonyl-[protein] + ATP = O-phospho-L-threonyl-[protein] + ADP + H(+)</text>
        <dbReference type="Rhea" id="RHEA:46608"/>
        <dbReference type="Rhea" id="RHEA-COMP:11060"/>
        <dbReference type="Rhea" id="RHEA-COMP:11605"/>
        <dbReference type="ChEBI" id="CHEBI:15378"/>
        <dbReference type="ChEBI" id="CHEBI:30013"/>
        <dbReference type="ChEBI" id="CHEBI:30616"/>
        <dbReference type="ChEBI" id="CHEBI:61977"/>
        <dbReference type="ChEBI" id="CHEBI:456216"/>
        <dbReference type="EC" id="2.7.11.1"/>
    </reaction>
</comment>
<comment type="subunit">
    <text evidence="10">Interacts with XRS2 and associates with DNA double-strand breaks.</text>
</comment>
<comment type="subcellular location">
    <subcellularLocation>
        <location evidence="11">Nucleus</location>
    </subcellularLocation>
    <subcellularLocation>
        <location evidence="11">Chromosome</location>
        <location evidence="11">Telomere</location>
    </subcellularLocation>
    <text>Localizes to nuclear DNA repair foci in response to DNA double strand breaks.</text>
</comment>
<comment type="similarity">
    <text evidence="17">Belongs to the PI3/PI4-kinase family. ATM subfamily.</text>
</comment>
<name>ATM_YEAST</name>
<protein>
    <recommendedName>
        <fullName>Serine/threonine-protein kinase TEL1</fullName>
        <ecNumber>2.7.11.1</ecNumber>
    </recommendedName>
    <alternativeName>
        <fullName>ATM homolog</fullName>
    </alternativeName>
    <alternativeName>
        <fullName>DNA-damage checkpoint kinase TEL1</fullName>
    </alternativeName>
    <alternativeName>
        <fullName>Telomere length regulation protein 1</fullName>
    </alternativeName>
</protein>
<evidence type="ECO:0000255" key="1">
    <source>
        <dbReference type="PROSITE-ProRule" id="PRU00269"/>
    </source>
</evidence>
<evidence type="ECO:0000255" key="2">
    <source>
        <dbReference type="PROSITE-ProRule" id="PRU00534"/>
    </source>
</evidence>
<evidence type="ECO:0000255" key="3">
    <source>
        <dbReference type="PROSITE-ProRule" id="PRU00535"/>
    </source>
</evidence>
<evidence type="ECO:0000269" key="4">
    <source>
    </source>
</evidence>
<evidence type="ECO:0000269" key="5">
    <source>
    </source>
</evidence>
<evidence type="ECO:0000269" key="6">
    <source>
    </source>
</evidence>
<evidence type="ECO:0000269" key="7">
    <source>
    </source>
</evidence>
<evidence type="ECO:0000269" key="8">
    <source>
    </source>
</evidence>
<evidence type="ECO:0000269" key="9">
    <source>
    </source>
</evidence>
<evidence type="ECO:0000269" key="10">
    <source>
    </source>
</evidence>
<evidence type="ECO:0000269" key="11">
    <source>
    </source>
</evidence>
<evidence type="ECO:0000269" key="12">
    <source>
    </source>
</evidence>
<evidence type="ECO:0000269" key="13">
    <source>
    </source>
</evidence>
<evidence type="ECO:0000269" key="14">
    <source>
    </source>
</evidence>
<evidence type="ECO:0000269" key="15">
    <source>
    </source>
</evidence>
<evidence type="ECO:0000269" key="16">
    <source>
    </source>
</evidence>
<evidence type="ECO:0000305" key="17"/>
<proteinExistence type="evidence at protein level"/>
<keyword id="KW-0002">3D-structure</keyword>
<keyword id="KW-0067">ATP-binding</keyword>
<keyword id="KW-0156">Chromatin regulator</keyword>
<keyword id="KW-0158">Chromosome</keyword>
<keyword id="KW-0227">DNA damage</keyword>
<keyword id="KW-0418">Kinase</keyword>
<keyword id="KW-0547">Nucleotide-binding</keyword>
<keyword id="KW-0539">Nucleus</keyword>
<keyword id="KW-1185">Reference proteome</keyword>
<keyword id="KW-0723">Serine/threonine-protein kinase</keyword>
<keyword id="KW-0779">Telomere</keyword>
<keyword id="KW-0808">Transferase</keyword>
<reference key="1">
    <citation type="journal article" date="1995" name="Yeast">
        <title>Sequence analysis of a 78.6 kb segment of the left end of Saccharomyces cerevisiae chromosome II.</title>
        <authorList>
            <person name="Obermaier B."/>
            <person name="Gassenhuber J."/>
            <person name="Piravandi E."/>
            <person name="Domdey H."/>
        </authorList>
    </citation>
    <scope>NUCLEOTIDE SEQUENCE [GENOMIC DNA]</scope>
    <source>
        <strain>ATCC 204508 / S288c</strain>
    </source>
</reference>
<reference key="2">
    <citation type="journal article" date="1994" name="EMBO J.">
        <title>Complete DNA sequence of yeast chromosome II.</title>
        <authorList>
            <person name="Feldmann H."/>
            <person name="Aigle M."/>
            <person name="Aljinovic G."/>
            <person name="Andre B."/>
            <person name="Baclet M.C."/>
            <person name="Barthe C."/>
            <person name="Baur A."/>
            <person name="Becam A.-M."/>
            <person name="Biteau N."/>
            <person name="Boles E."/>
            <person name="Brandt T."/>
            <person name="Brendel M."/>
            <person name="Brueckner M."/>
            <person name="Bussereau F."/>
            <person name="Christiansen C."/>
            <person name="Contreras R."/>
            <person name="Crouzet M."/>
            <person name="Cziepluch C."/>
            <person name="Demolis N."/>
            <person name="Delaveau T."/>
            <person name="Doignon F."/>
            <person name="Domdey H."/>
            <person name="Duesterhus S."/>
            <person name="Dubois E."/>
            <person name="Dujon B."/>
            <person name="El Bakkoury M."/>
            <person name="Entian K.-D."/>
            <person name="Feuermann M."/>
            <person name="Fiers W."/>
            <person name="Fobo G.M."/>
            <person name="Fritz C."/>
            <person name="Gassenhuber J."/>
            <person name="Glansdorff N."/>
            <person name="Goffeau A."/>
            <person name="Grivell L.A."/>
            <person name="de Haan M."/>
            <person name="Hein C."/>
            <person name="Herbert C.J."/>
            <person name="Hollenberg C.P."/>
            <person name="Holmstroem K."/>
            <person name="Jacq C."/>
            <person name="Jacquet M."/>
            <person name="Jauniaux J.-C."/>
            <person name="Jonniaux J.-L."/>
            <person name="Kallesoee T."/>
            <person name="Kiesau P."/>
            <person name="Kirchrath L."/>
            <person name="Koetter P."/>
            <person name="Korol S."/>
            <person name="Liebl S."/>
            <person name="Logghe M."/>
            <person name="Lohan A.J.E."/>
            <person name="Louis E.J."/>
            <person name="Li Z.Y."/>
            <person name="Maat M.J."/>
            <person name="Mallet L."/>
            <person name="Mannhaupt G."/>
            <person name="Messenguy F."/>
            <person name="Miosga T."/>
            <person name="Molemans F."/>
            <person name="Mueller S."/>
            <person name="Nasr F."/>
            <person name="Obermaier B."/>
            <person name="Perea J."/>
            <person name="Pierard A."/>
            <person name="Piravandi E."/>
            <person name="Pohl F.M."/>
            <person name="Pohl T.M."/>
            <person name="Potier S."/>
            <person name="Proft M."/>
            <person name="Purnelle B."/>
            <person name="Ramezani Rad M."/>
            <person name="Rieger M."/>
            <person name="Rose M."/>
            <person name="Schaaff-Gerstenschlaeger I."/>
            <person name="Scherens B."/>
            <person name="Schwarzlose C."/>
            <person name="Skala J."/>
            <person name="Slonimski P.P."/>
            <person name="Smits P.H.M."/>
            <person name="Souciet J.-L."/>
            <person name="Steensma H.Y."/>
            <person name="Stucka R."/>
            <person name="Urrestarazu L.A."/>
            <person name="van der Aart Q.J.M."/>
            <person name="Van Dyck L."/>
            <person name="Vassarotti A."/>
            <person name="Vetter I."/>
            <person name="Vierendeels F."/>
            <person name="Vissers S."/>
            <person name="Wagner G."/>
            <person name="de Wergifosse P."/>
            <person name="Wolfe K.H."/>
            <person name="Zagulski M."/>
            <person name="Zimmermann F.K."/>
            <person name="Mewes H.-W."/>
            <person name="Kleine K."/>
        </authorList>
    </citation>
    <scope>NUCLEOTIDE SEQUENCE [LARGE SCALE GENOMIC DNA]</scope>
    <source>
        <strain>ATCC 204508 / S288c</strain>
    </source>
</reference>
<reference key="3">
    <citation type="journal article" date="2014" name="G3 (Bethesda)">
        <title>The reference genome sequence of Saccharomyces cerevisiae: Then and now.</title>
        <authorList>
            <person name="Engel S.R."/>
            <person name="Dietrich F.S."/>
            <person name="Fisk D.G."/>
            <person name="Binkley G."/>
            <person name="Balakrishnan R."/>
            <person name="Costanzo M.C."/>
            <person name="Dwight S.S."/>
            <person name="Hitz B.C."/>
            <person name="Karra K."/>
            <person name="Nash R.S."/>
            <person name="Weng S."/>
            <person name="Wong E.D."/>
            <person name="Lloyd P."/>
            <person name="Skrzypek M.S."/>
            <person name="Miyasato S.R."/>
            <person name="Simison M."/>
            <person name="Cherry J.M."/>
        </authorList>
    </citation>
    <scope>GENOME REANNOTATION</scope>
    <scope>SEQUENCE REVISION TO 1412</scope>
    <source>
        <strain>ATCC 204508 / S288c</strain>
    </source>
</reference>
<reference key="4">
    <citation type="journal article" date="1995" name="Cell">
        <title>TEL1, a gene involved in controlling telomere length in S. cerevisiae, is homologous to the human ataxia telangiectasia gene.</title>
        <authorList>
            <person name="Greenwell P.W."/>
            <person name="Kronmal S.L."/>
            <person name="Porter S.E."/>
            <person name="Gassenhuber J."/>
            <person name="Obermaier B."/>
            <person name="Petes T.D."/>
        </authorList>
    </citation>
    <scope>NUCLEOTIDE SEQUENCE [GENOMIC DNA] OF 1-1284</scope>
    <scope>FUNCTION</scope>
    <scope>MUTAGENESIS OF 2611-GLY-ASP-2612; ASN-2616 AND ASP-2631</scope>
</reference>
<reference key="5">
    <citation type="journal article" date="1996" name="Science">
        <title>Regulation of RAD53 by the ATM-like kinases MEC1 and TEL1 in yeast cell cycle checkpoint pathways.</title>
        <authorList>
            <person name="Sanchez Y."/>
            <person name="Desany B.A."/>
            <person name="Jones W.J."/>
            <person name="Liu Q."/>
            <person name="Wang B."/>
            <person name="Elledge S.J."/>
        </authorList>
    </citation>
    <scope>FUNCTION</scope>
</reference>
<reference key="6">
    <citation type="journal article" date="2000" name="Proc. Natl. Acad. Sci. U.S.A.">
        <title>Protein kinase activity of Tel1p and Mec1p, two Saccharomyces cerevisiae proteins related to the human ATM protein kinase.</title>
        <authorList>
            <person name="Mallory J.C."/>
            <person name="Petes T.D."/>
        </authorList>
    </citation>
    <scope>IDENTIFICATION AS A KINASE</scope>
    <scope>FUNCTION</scope>
    <scope>MUTAGENESIS OF 2611-GLY-ASP-2612; ASN-2616 AND ASP-2631</scope>
</reference>
<reference key="7">
    <citation type="journal article" date="2001" name="EMBO J.">
        <title>Hyperactivation of the yeast DNA damage checkpoint by TEL1 and DDC2 overexpression.</title>
        <authorList>
            <person name="Clerici M."/>
            <person name="Paciotti V."/>
            <person name="Baldo V."/>
            <person name="Romano M."/>
            <person name="Lucchini G."/>
            <person name="Longhese M.P."/>
        </authorList>
    </citation>
    <scope>FUNCTION</scope>
</reference>
<reference key="8">
    <citation type="journal article" date="2001" name="Cell">
        <title>Suppression of spontaneous chromosomal rearrangements by S phase checkpoint functions in Saccharomyces cerevisiae.</title>
        <authorList>
            <person name="Myung K."/>
            <person name="Datta A."/>
            <person name="Kolodner R.D."/>
        </authorList>
    </citation>
    <scope>FUNCTION</scope>
</reference>
<reference key="9">
    <citation type="journal article" date="2001" name="Genes Dev.">
        <title>The yeast Xrs2 complex functions in S phase checkpoint regulation.</title>
        <authorList>
            <person name="D'Amours D."/>
            <person name="Jackson S.P."/>
        </authorList>
    </citation>
    <scope>FUNCTION</scope>
</reference>
<reference key="10">
    <citation type="journal article" date="2001" name="Mol. Cell">
        <title>A DNA damage response pathway controlled by Tel1 and the Mre11 complex.</title>
        <authorList>
            <person name="Usui T."/>
            <person name="Ogawa H."/>
            <person name="Petrini J.H.J."/>
        </authorList>
    </citation>
    <scope>FUNCTION</scope>
</reference>
<reference key="11">
    <citation type="journal article" date="2002" name="Mol. Cell">
        <title>Lcd1p recruits Mec1p to DNA lesions in vitro and in vivo.</title>
        <authorList>
            <person name="Rouse J."/>
            <person name="Jackson S.P."/>
        </authorList>
    </citation>
    <scope>RECRUITMENT TO DNA LESIONS</scope>
</reference>
<reference key="12">
    <citation type="journal article" date="2003" name="EMBO Rep.">
        <title>Yeast histone 2A serine 129 is essential for the efficient repair of checkpoint-blind DNA damage.</title>
        <authorList>
            <person name="Redon C."/>
            <person name="Pilch D.R."/>
            <person name="Rogakou E.P."/>
            <person name="Orr A.H."/>
            <person name="Lowndes N.F."/>
            <person name="Bonner W.M."/>
        </authorList>
    </citation>
    <scope>FUNCTION</scope>
</reference>
<reference key="13">
    <citation type="journal article" date="2003" name="Genes Dev.">
        <title>ATM-related Tel1 associates with double-strand breaks through an Xrs2-dependent mechanism.</title>
        <authorList>
            <person name="Nakada D."/>
            <person name="Matsumoto K."/>
            <person name="Sugimoto K."/>
        </authorList>
    </citation>
    <scope>FUNCTION</scope>
    <scope>INTERACTION WITH XRS2</scope>
    <scope>ASSOCIATION WITH DNA DOUBLE-STRAND BREAKS</scope>
</reference>
<reference key="14">
    <citation type="journal article" date="2004" name="Cell">
        <title>Choreography of the DNA damage response: spatiotemporal relationships among checkpoint and repair proteins.</title>
        <authorList>
            <person name="Lisby M."/>
            <person name="Barlow J.H."/>
            <person name="Burgess R.C."/>
            <person name="Rothstein R."/>
        </authorList>
    </citation>
    <scope>FUNCTION</scope>
    <scope>SUBCELLULAR LOCATION</scope>
</reference>
<reference key="15">
    <citation type="journal article" date="2004" name="Curr. Biol.">
        <title>Distribution and dynamics of chromatin modification induced by a defined DNA double-strand break.</title>
        <authorList>
            <person name="Shroff R."/>
            <person name="Arbel-Eden A."/>
            <person name="Pilch D.R."/>
            <person name="Ira G."/>
            <person name="Bonner W.M."/>
            <person name="Petrini J.H.J."/>
            <person name="Haber J.E."/>
            <person name="Lichten M."/>
        </authorList>
    </citation>
    <scope>FUNCTION</scope>
</reference>
<reference key="16">
    <citation type="journal article" date="2005" name="Biochem. J.">
        <title>Slx4 becomes phosphorylated after DNA damage in a Mec1/Tel1-dependent manner and is required for repair of DNA alkylation damage.</title>
        <authorList>
            <person name="Flott S."/>
            <person name="Rouse J."/>
        </authorList>
    </citation>
    <scope>FUNCTION</scope>
    <scope>PHOSPHORYLATION OF SLX4</scope>
</reference>
<reference key="17">
    <citation type="journal article" date="2005" name="Curr. Genet.">
        <title>A mutation in yeast Tel1p that causes differential effects on the DNA damage checkpoint and telomere maintenance.</title>
        <authorList>
            <person name="Chakhparonian M."/>
            <person name="Faucher D."/>
            <person name="Wellinger R.J."/>
        </authorList>
    </citation>
    <scope>FUNCTION</scope>
    <scope>MUTAGENESIS OF GLU-1319</scope>
</reference>